<evidence type="ECO:0000255" key="1">
    <source>
        <dbReference type="HAMAP-Rule" id="MF_01366"/>
    </source>
</evidence>
<evidence type="ECO:0000305" key="2"/>
<comment type="function">
    <text evidence="1">This protein is one of the early assembly proteins of the 50S ribosomal subunit, although it is not seen to bind rRNA by itself. It is important during the early stages of 50S assembly.</text>
</comment>
<comment type="subunit">
    <text evidence="1">Part of the 50S ribosomal subunit.</text>
</comment>
<comment type="similarity">
    <text evidence="1">Belongs to the universal ribosomal protein uL13 family.</text>
</comment>
<keyword id="KW-0687">Ribonucleoprotein</keyword>
<keyword id="KW-0689">Ribosomal protein</keyword>
<protein>
    <recommendedName>
        <fullName evidence="1">Large ribosomal subunit protein uL13</fullName>
    </recommendedName>
    <alternativeName>
        <fullName evidence="2">50S ribosomal protein L13</fullName>
    </alternativeName>
</protein>
<dbReference type="EMBL" id="CP000962">
    <property type="protein sequence ID" value="ACA54439.1"/>
    <property type="molecule type" value="Genomic_DNA"/>
</dbReference>
<dbReference type="RefSeq" id="WP_003494906.1">
    <property type="nucleotide sequence ID" value="NC_010520.1"/>
</dbReference>
<dbReference type="SMR" id="B1KSJ0"/>
<dbReference type="GeneID" id="92940215"/>
<dbReference type="KEGG" id="cbl:CLK_2889"/>
<dbReference type="HOGENOM" id="CLU_082184_2_2_9"/>
<dbReference type="GO" id="GO:0022625">
    <property type="term" value="C:cytosolic large ribosomal subunit"/>
    <property type="evidence" value="ECO:0007669"/>
    <property type="project" value="TreeGrafter"/>
</dbReference>
<dbReference type="GO" id="GO:0003729">
    <property type="term" value="F:mRNA binding"/>
    <property type="evidence" value="ECO:0007669"/>
    <property type="project" value="TreeGrafter"/>
</dbReference>
<dbReference type="GO" id="GO:0003735">
    <property type="term" value="F:structural constituent of ribosome"/>
    <property type="evidence" value="ECO:0007669"/>
    <property type="project" value="InterPro"/>
</dbReference>
<dbReference type="GO" id="GO:0017148">
    <property type="term" value="P:negative regulation of translation"/>
    <property type="evidence" value="ECO:0007669"/>
    <property type="project" value="TreeGrafter"/>
</dbReference>
<dbReference type="GO" id="GO:0006412">
    <property type="term" value="P:translation"/>
    <property type="evidence" value="ECO:0007669"/>
    <property type="project" value="UniProtKB-UniRule"/>
</dbReference>
<dbReference type="CDD" id="cd00392">
    <property type="entry name" value="Ribosomal_L13"/>
    <property type="match status" value="1"/>
</dbReference>
<dbReference type="FunFam" id="3.90.1180.10:FF:000001">
    <property type="entry name" value="50S ribosomal protein L13"/>
    <property type="match status" value="1"/>
</dbReference>
<dbReference type="Gene3D" id="3.90.1180.10">
    <property type="entry name" value="Ribosomal protein L13"/>
    <property type="match status" value="1"/>
</dbReference>
<dbReference type="HAMAP" id="MF_01366">
    <property type="entry name" value="Ribosomal_uL13"/>
    <property type="match status" value="1"/>
</dbReference>
<dbReference type="InterPro" id="IPR005822">
    <property type="entry name" value="Ribosomal_uL13"/>
</dbReference>
<dbReference type="InterPro" id="IPR005823">
    <property type="entry name" value="Ribosomal_uL13_bac-type"/>
</dbReference>
<dbReference type="InterPro" id="IPR023563">
    <property type="entry name" value="Ribosomal_uL13_CS"/>
</dbReference>
<dbReference type="InterPro" id="IPR036899">
    <property type="entry name" value="Ribosomal_uL13_sf"/>
</dbReference>
<dbReference type="NCBIfam" id="TIGR01066">
    <property type="entry name" value="rplM_bact"/>
    <property type="match status" value="1"/>
</dbReference>
<dbReference type="PANTHER" id="PTHR11545:SF2">
    <property type="entry name" value="LARGE RIBOSOMAL SUBUNIT PROTEIN UL13M"/>
    <property type="match status" value="1"/>
</dbReference>
<dbReference type="PANTHER" id="PTHR11545">
    <property type="entry name" value="RIBOSOMAL PROTEIN L13"/>
    <property type="match status" value="1"/>
</dbReference>
<dbReference type="Pfam" id="PF00572">
    <property type="entry name" value="Ribosomal_L13"/>
    <property type="match status" value="1"/>
</dbReference>
<dbReference type="PIRSF" id="PIRSF002181">
    <property type="entry name" value="Ribosomal_L13"/>
    <property type="match status" value="1"/>
</dbReference>
<dbReference type="SUPFAM" id="SSF52161">
    <property type="entry name" value="Ribosomal protein L13"/>
    <property type="match status" value="1"/>
</dbReference>
<dbReference type="PROSITE" id="PS00783">
    <property type="entry name" value="RIBOSOMAL_L13"/>
    <property type="match status" value="1"/>
</dbReference>
<sequence length="144" mass="16479">MKSYIAKPHEVERKWYIVDAADKPLGRVASQVASILRGKHKPTYTPHVDTGDNVIVINVEKVVLTGKKLDQKLLRHHSLYPGGLKEIPYREAIAKKPEFVFEEAVRRMLPSGVLGRKMLKKLKVYKGAEHNQEAQKPEVLELRY</sequence>
<gene>
    <name evidence="1" type="primary">rplM</name>
    <name type="ordered locus">CLK_2889</name>
</gene>
<accession>B1KSJ0</accession>
<name>RL13_CLOBM</name>
<reference key="1">
    <citation type="journal article" date="2007" name="PLoS ONE">
        <title>Analysis of the neurotoxin complex genes in Clostridium botulinum A1-A4 and B1 strains: BoNT/A3, /Ba4 and /B1 clusters are located within plasmids.</title>
        <authorList>
            <person name="Smith T.J."/>
            <person name="Hill K.K."/>
            <person name="Foley B.T."/>
            <person name="Detter J.C."/>
            <person name="Munk A.C."/>
            <person name="Bruce D.C."/>
            <person name="Doggett N.A."/>
            <person name="Smith L.A."/>
            <person name="Marks J.D."/>
            <person name="Xie G."/>
            <person name="Brettin T.S."/>
        </authorList>
    </citation>
    <scope>NUCLEOTIDE SEQUENCE [LARGE SCALE GENOMIC DNA]</scope>
    <source>
        <strain>Loch Maree / Type A3</strain>
    </source>
</reference>
<proteinExistence type="inferred from homology"/>
<organism>
    <name type="scientific">Clostridium botulinum (strain Loch Maree / Type A3)</name>
    <dbReference type="NCBI Taxonomy" id="498214"/>
    <lineage>
        <taxon>Bacteria</taxon>
        <taxon>Bacillati</taxon>
        <taxon>Bacillota</taxon>
        <taxon>Clostridia</taxon>
        <taxon>Eubacteriales</taxon>
        <taxon>Clostridiaceae</taxon>
        <taxon>Clostridium</taxon>
    </lineage>
</organism>
<feature type="chain" id="PRO_1000144110" description="Large ribosomal subunit protein uL13">
    <location>
        <begin position="1"/>
        <end position="144"/>
    </location>
</feature>